<reference key="1">
    <citation type="journal article" date="2000" name="DNA Res.">
        <title>Structural analysis of Arabidopsis thaliana chromosome 5. X. Sequence features of the regions of 3,076,755 bp covered by sixty P1 and TAC clones.</title>
        <authorList>
            <person name="Sato S."/>
            <person name="Nakamura Y."/>
            <person name="Kaneko T."/>
            <person name="Katoh T."/>
            <person name="Asamizu E."/>
            <person name="Kotani H."/>
            <person name="Tabata S."/>
        </authorList>
    </citation>
    <scope>NUCLEOTIDE SEQUENCE [LARGE SCALE GENOMIC DNA]</scope>
    <source>
        <strain>cv. Columbia</strain>
    </source>
</reference>
<reference key="2">
    <citation type="journal article" date="2017" name="Plant J.">
        <title>Araport11: a complete reannotation of the Arabidopsis thaliana reference genome.</title>
        <authorList>
            <person name="Cheng C.Y."/>
            <person name="Krishnakumar V."/>
            <person name="Chan A.P."/>
            <person name="Thibaud-Nissen F."/>
            <person name="Schobel S."/>
            <person name="Town C.D."/>
        </authorList>
    </citation>
    <scope>GENOME REANNOTATION</scope>
    <source>
        <strain>cv. Columbia</strain>
    </source>
</reference>
<reference key="3">
    <citation type="submission" date="2002-03" db="EMBL/GenBank/DDBJ databases">
        <title>Full-length cDNA from Arabidopsis thaliana.</title>
        <authorList>
            <person name="Brover V.V."/>
            <person name="Troukhan M.E."/>
            <person name="Alexandrov N.A."/>
            <person name="Lu Y.-P."/>
            <person name="Flavell R.B."/>
            <person name="Feldmann K.A."/>
        </authorList>
    </citation>
    <scope>NUCLEOTIDE SEQUENCE [LARGE SCALE MRNA]</scope>
</reference>
<organism>
    <name type="scientific">Arabidopsis thaliana</name>
    <name type="common">Mouse-ear cress</name>
    <dbReference type="NCBI Taxonomy" id="3702"/>
    <lineage>
        <taxon>Eukaryota</taxon>
        <taxon>Viridiplantae</taxon>
        <taxon>Streptophyta</taxon>
        <taxon>Embryophyta</taxon>
        <taxon>Tracheophyta</taxon>
        <taxon>Spermatophyta</taxon>
        <taxon>Magnoliopsida</taxon>
        <taxon>eudicotyledons</taxon>
        <taxon>Gunneridae</taxon>
        <taxon>Pentapetalae</taxon>
        <taxon>rosids</taxon>
        <taxon>malvids</taxon>
        <taxon>Brassicales</taxon>
        <taxon>Brassicaceae</taxon>
        <taxon>Camelineae</taxon>
        <taxon>Arabidopsis</taxon>
    </lineage>
</organism>
<evidence type="ECO:0000256" key="1">
    <source>
        <dbReference type="SAM" id="MobiDB-lite"/>
    </source>
</evidence>
<evidence type="ECO:0000305" key="2"/>
<accession>Q8LE10</accession>
<accession>Q9FH69</accession>
<protein>
    <recommendedName>
        <fullName>HVA22-like protein i</fullName>
        <shortName>AtHVA22i</shortName>
    </recommendedName>
</protein>
<comment type="alternative products">
    <event type="alternative splicing"/>
    <isoform>
        <id>Q8LE10-1</id>
        <name>1</name>
        <sequence type="displayed"/>
    </isoform>
    <text>A number of isoforms are produced. According to EST sequences.</text>
</comment>
<comment type="similarity">
    <text evidence="2">Belongs to the DP1 family.</text>
</comment>
<comment type="sequence caution" evidence="2">
    <conflict type="erroneous gene model prediction">
        <sequence resource="EMBL-CDS" id="BAB09327"/>
    </conflict>
</comment>
<sequence length="296" mass="33364">MIGSFLTRGLVMVLGYAYPAYECYKTVEKNRPEIEQLRFWCQYWILVACLTVFERVGDAFVSWVPMYSEAKLAFFIYLWYPKTRGTTYVYESFFRPYLSQHENDIDHSLLELRTRAGDMAVIYWQRVASYGQTRILEILQYVAAQSTPRPQPPQKRGGRANQAPAKPKKAPVPQSEPEEVSLSSSSSSSSSENEGNEPTRKVSGPSRPRPTVTSVPAADPKNAGTTQIAQKSVASPIVNPPQSTTQVEPMQIEEVEGEAESGNENPNPEGPKETVMEETIRMTRGRLRKTRSEESR</sequence>
<dbReference type="EMBL" id="AB022210">
    <property type="protein sequence ID" value="BAB09327.1"/>
    <property type="status" value="ALT_SEQ"/>
    <property type="molecule type" value="Genomic_DNA"/>
</dbReference>
<dbReference type="EMBL" id="CP002688">
    <property type="protein sequence ID" value="AED94826.1"/>
    <property type="molecule type" value="Genomic_DNA"/>
</dbReference>
<dbReference type="EMBL" id="AY085687">
    <property type="protein sequence ID" value="AAM62906.1"/>
    <property type="molecule type" value="mRNA"/>
</dbReference>
<dbReference type="RefSeq" id="NP_568606.1">
    <molecule id="Q8LE10-1"/>
    <property type="nucleotide sequence ID" value="NM_123620.4"/>
</dbReference>
<dbReference type="FunCoup" id="Q8LE10">
    <property type="interactions" value="2100"/>
</dbReference>
<dbReference type="STRING" id="3702.Q8LE10"/>
<dbReference type="iPTMnet" id="Q8LE10"/>
<dbReference type="PaxDb" id="3702-AT5G42560.1"/>
<dbReference type="ProteomicsDB" id="232212">
    <molecule id="Q8LE10-1"/>
</dbReference>
<dbReference type="EnsemblPlants" id="AT5G42560.1">
    <molecule id="Q8LE10-1"/>
    <property type="protein sequence ID" value="AT5G42560.1"/>
    <property type="gene ID" value="AT5G42560"/>
</dbReference>
<dbReference type="GeneID" id="834262"/>
<dbReference type="Gramene" id="AT5G42560.1">
    <molecule id="Q8LE10-1"/>
    <property type="protein sequence ID" value="AT5G42560.1"/>
    <property type="gene ID" value="AT5G42560"/>
</dbReference>
<dbReference type="KEGG" id="ath:AT5G42560"/>
<dbReference type="Araport" id="AT5G42560"/>
<dbReference type="TAIR" id="AT5G42560"/>
<dbReference type="eggNOG" id="KOG1726">
    <property type="taxonomic scope" value="Eukaryota"/>
</dbReference>
<dbReference type="HOGENOM" id="CLU_028431_5_0_1"/>
<dbReference type="InParanoid" id="Q8LE10"/>
<dbReference type="OrthoDB" id="434647at2759"/>
<dbReference type="PhylomeDB" id="Q8LE10"/>
<dbReference type="PRO" id="PR:Q8LE10"/>
<dbReference type="Proteomes" id="UP000006548">
    <property type="component" value="Chromosome 5"/>
</dbReference>
<dbReference type="ExpressionAtlas" id="Q8LE10">
    <property type="expression patterns" value="baseline and differential"/>
</dbReference>
<dbReference type="InterPro" id="IPR004345">
    <property type="entry name" value="TB2_DP1_HVA22"/>
</dbReference>
<dbReference type="PANTHER" id="PTHR12300">
    <property type="entry name" value="HVA22-LIKE PROTEINS"/>
    <property type="match status" value="1"/>
</dbReference>
<dbReference type="PANTHER" id="PTHR12300:SF117">
    <property type="entry name" value="LP05237P-RELATED"/>
    <property type="match status" value="1"/>
</dbReference>
<dbReference type="Pfam" id="PF03134">
    <property type="entry name" value="TB2_DP1_HVA22"/>
    <property type="match status" value="1"/>
</dbReference>
<proteinExistence type="evidence at transcript level"/>
<gene>
    <name type="primary">HVA22I</name>
    <name type="ordered locus">At5g42560</name>
    <name type="ORF">K16E1.3</name>
</gene>
<keyword id="KW-0025">Alternative splicing</keyword>
<keyword id="KW-1185">Reference proteome</keyword>
<feature type="chain" id="PRO_0000101843" description="HVA22-like protein i">
    <location>
        <begin position="1"/>
        <end position="296"/>
    </location>
</feature>
<feature type="region of interest" description="Disordered" evidence="1">
    <location>
        <begin position="146"/>
        <end position="296"/>
    </location>
</feature>
<feature type="compositionally biased region" description="Low complexity" evidence="1">
    <location>
        <begin position="180"/>
        <end position="193"/>
    </location>
</feature>
<feature type="compositionally biased region" description="Polar residues" evidence="1">
    <location>
        <begin position="223"/>
        <end position="233"/>
    </location>
</feature>
<feature type="compositionally biased region" description="Acidic residues" evidence="1">
    <location>
        <begin position="251"/>
        <end position="261"/>
    </location>
</feature>
<feature type="compositionally biased region" description="Basic and acidic residues" evidence="1">
    <location>
        <begin position="270"/>
        <end position="281"/>
    </location>
</feature>
<feature type="sequence conflict" description="In Ref. 3; AAM62906." evidence="2" ref="3">
    <original>G</original>
    <variation>V</variation>
    <location>
        <position position="158"/>
    </location>
</feature>
<name>HA22I_ARATH</name>